<gene>
    <name evidence="1" type="primary">clpX</name>
    <name type="ordered locus">Atu1259</name>
    <name type="ORF">AGR_C_2327</name>
</gene>
<proteinExistence type="inferred from homology"/>
<protein>
    <recommendedName>
        <fullName evidence="1">ATP-dependent Clp protease ATP-binding subunit ClpX</fullName>
    </recommendedName>
</protein>
<keyword id="KW-0067">ATP-binding</keyword>
<keyword id="KW-0143">Chaperone</keyword>
<keyword id="KW-0479">Metal-binding</keyword>
<keyword id="KW-0547">Nucleotide-binding</keyword>
<keyword id="KW-1185">Reference proteome</keyword>
<keyword id="KW-0862">Zinc</keyword>
<dbReference type="EMBL" id="AE007869">
    <property type="protein sequence ID" value="AAK87055.1"/>
    <property type="molecule type" value="Genomic_DNA"/>
</dbReference>
<dbReference type="PIR" id="AF2731">
    <property type="entry name" value="AF2731"/>
</dbReference>
<dbReference type="PIR" id="F97512">
    <property type="entry name" value="F97512"/>
</dbReference>
<dbReference type="RefSeq" id="NP_354270.1">
    <property type="nucleotide sequence ID" value="NC_003062.2"/>
</dbReference>
<dbReference type="RefSeq" id="WP_006312723.1">
    <property type="nucleotide sequence ID" value="NC_003062.2"/>
</dbReference>
<dbReference type="SMR" id="Q8UFY5"/>
<dbReference type="STRING" id="176299.Atu1259"/>
<dbReference type="EnsemblBacteria" id="AAK87055">
    <property type="protein sequence ID" value="AAK87055"/>
    <property type="gene ID" value="Atu1259"/>
</dbReference>
<dbReference type="GeneID" id="1133297"/>
<dbReference type="KEGG" id="atu:Atu1259"/>
<dbReference type="PATRIC" id="fig|176299.10.peg.1280"/>
<dbReference type="eggNOG" id="COG1219">
    <property type="taxonomic scope" value="Bacteria"/>
</dbReference>
<dbReference type="HOGENOM" id="CLU_014218_8_2_5"/>
<dbReference type="OrthoDB" id="9804062at2"/>
<dbReference type="PhylomeDB" id="Q8UFY5"/>
<dbReference type="BioCyc" id="AGRO:ATU1259-MONOMER"/>
<dbReference type="Proteomes" id="UP000000813">
    <property type="component" value="Chromosome circular"/>
</dbReference>
<dbReference type="GO" id="GO:0009376">
    <property type="term" value="C:HslUV protease complex"/>
    <property type="evidence" value="ECO:0007669"/>
    <property type="project" value="TreeGrafter"/>
</dbReference>
<dbReference type="GO" id="GO:0005524">
    <property type="term" value="F:ATP binding"/>
    <property type="evidence" value="ECO:0007669"/>
    <property type="project" value="UniProtKB-UniRule"/>
</dbReference>
<dbReference type="GO" id="GO:0016887">
    <property type="term" value="F:ATP hydrolysis activity"/>
    <property type="evidence" value="ECO:0007669"/>
    <property type="project" value="InterPro"/>
</dbReference>
<dbReference type="GO" id="GO:0140662">
    <property type="term" value="F:ATP-dependent protein folding chaperone"/>
    <property type="evidence" value="ECO:0007669"/>
    <property type="project" value="InterPro"/>
</dbReference>
<dbReference type="GO" id="GO:0046983">
    <property type="term" value="F:protein dimerization activity"/>
    <property type="evidence" value="ECO:0007669"/>
    <property type="project" value="InterPro"/>
</dbReference>
<dbReference type="GO" id="GO:0051082">
    <property type="term" value="F:unfolded protein binding"/>
    <property type="evidence" value="ECO:0007669"/>
    <property type="project" value="UniProtKB-UniRule"/>
</dbReference>
<dbReference type="GO" id="GO:0008270">
    <property type="term" value="F:zinc ion binding"/>
    <property type="evidence" value="ECO:0007669"/>
    <property type="project" value="InterPro"/>
</dbReference>
<dbReference type="GO" id="GO:0051301">
    <property type="term" value="P:cell division"/>
    <property type="evidence" value="ECO:0007669"/>
    <property type="project" value="TreeGrafter"/>
</dbReference>
<dbReference type="GO" id="GO:0051603">
    <property type="term" value="P:proteolysis involved in protein catabolic process"/>
    <property type="evidence" value="ECO:0007669"/>
    <property type="project" value="TreeGrafter"/>
</dbReference>
<dbReference type="CDD" id="cd19497">
    <property type="entry name" value="RecA-like_ClpX"/>
    <property type="match status" value="1"/>
</dbReference>
<dbReference type="FunFam" id="1.10.8.60:FF:000002">
    <property type="entry name" value="ATP-dependent Clp protease ATP-binding subunit ClpX"/>
    <property type="match status" value="1"/>
</dbReference>
<dbReference type="FunFam" id="3.40.50.300:FF:000005">
    <property type="entry name" value="ATP-dependent Clp protease ATP-binding subunit ClpX"/>
    <property type="match status" value="1"/>
</dbReference>
<dbReference type="Gene3D" id="1.10.8.60">
    <property type="match status" value="1"/>
</dbReference>
<dbReference type="Gene3D" id="6.20.220.10">
    <property type="entry name" value="ClpX chaperone, C4-type zinc finger domain"/>
    <property type="match status" value="1"/>
</dbReference>
<dbReference type="Gene3D" id="3.40.50.300">
    <property type="entry name" value="P-loop containing nucleotide triphosphate hydrolases"/>
    <property type="match status" value="1"/>
</dbReference>
<dbReference type="HAMAP" id="MF_00175">
    <property type="entry name" value="ClpX"/>
    <property type="match status" value="1"/>
</dbReference>
<dbReference type="InterPro" id="IPR003593">
    <property type="entry name" value="AAA+_ATPase"/>
</dbReference>
<dbReference type="InterPro" id="IPR050052">
    <property type="entry name" value="ATP-dep_Clp_protease_ClpX"/>
</dbReference>
<dbReference type="InterPro" id="IPR003959">
    <property type="entry name" value="ATPase_AAA_core"/>
</dbReference>
<dbReference type="InterPro" id="IPR019489">
    <property type="entry name" value="Clp_ATPase_C"/>
</dbReference>
<dbReference type="InterPro" id="IPR004487">
    <property type="entry name" value="Clp_protease_ATP-bd_su_ClpX"/>
</dbReference>
<dbReference type="InterPro" id="IPR046425">
    <property type="entry name" value="ClpX_bact"/>
</dbReference>
<dbReference type="InterPro" id="IPR027417">
    <property type="entry name" value="P-loop_NTPase"/>
</dbReference>
<dbReference type="InterPro" id="IPR010603">
    <property type="entry name" value="Znf_CppX_C4"/>
</dbReference>
<dbReference type="InterPro" id="IPR038366">
    <property type="entry name" value="Znf_CppX_C4_sf"/>
</dbReference>
<dbReference type="NCBIfam" id="TIGR00382">
    <property type="entry name" value="clpX"/>
    <property type="match status" value="1"/>
</dbReference>
<dbReference type="NCBIfam" id="NF003745">
    <property type="entry name" value="PRK05342.1"/>
    <property type="match status" value="1"/>
</dbReference>
<dbReference type="PANTHER" id="PTHR48102:SF7">
    <property type="entry name" value="ATP-DEPENDENT CLP PROTEASE ATP-BINDING SUBUNIT CLPX-LIKE, MITOCHONDRIAL"/>
    <property type="match status" value="1"/>
</dbReference>
<dbReference type="PANTHER" id="PTHR48102">
    <property type="entry name" value="ATP-DEPENDENT CLP PROTEASE ATP-BINDING SUBUNIT CLPX-LIKE, MITOCHONDRIAL-RELATED"/>
    <property type="match status" value="1"/>
</dbReference>
<dbReference type="Pfam" id="PF07724">
    <property type="entry name" value="AAA_2"/>
    <property type="match status" value="1"/>
</dbReference>
<dbReference type="Pfam" id="PF10431">
    <property type="entry name" value="ClpB_D2-small"/>
    <property type="match status" value="1"/>
</dbReference>
<dbReference type="Pfam" id="PF06689">
    <property type="entry name" value="zf-C4_ClpX"/>
    <property type="match status" value="1"/>
</dbReference>
<dbReference type="SMART" id="SM00382">
    <property type="entry name" value="AAA"/>
    <property type="match status" value="1"/>
</dbReference>
<dbReference type="SMART" id="SM01086">
    <property type="entry name" value="ClpB_D2-small"/>
    <property type="match status" value="1"/>
</dbReference>
<dbReference type="SMART" id="SM00994">
    <property type="entry name" value="zf-C4_ClpX"/>
    <property type="match status" value="1"/>
</dbReference>
<dbReference type="SUPFAM" id="SSF57716">
    <property type="entry name" value="Glucocorticoid receptor-like (DNA-binding domain)"/>
    <property type="match status" value="1"/>
</dbReference>
<dbReference type="SUPFAM" id="SSF52540">
    <property type="entry name" value="P-loop containing nucleoside triphosphate hydrolases"/>
    <property type="match status" value="1"/>
</dbReference>
<dbReference type="PROSITE" id="PS51902">
    <property type="entry name" value="CLPX_ZB"/>
    <property type="match status" value="1"/>
</dbReference>
<evidence type="ECO:0000255" key="1">
    <source>
        <dbReference type="HAMAP-Rule" id="MF_00175"/>
    </source>
</evidence>
<evidence type="ECO:0000255" key="2">
    <source>
        <dbReference type="PROSITE-ProRule" id="PRU01250"/>
    </source>
</evidence>
<reference key="1">
    <citation type="journal article" date="2001" name="Science">
        <title>The genome of the natural genetic engineer Agrobacterium tumefaciens C58.</title>
        <authorList>
            <person name="Wood D.W."/>
            <person name="Setubal J.C."/>
            <person name="Kaul R."/>
            <person name="Monks D.E."/>
            <person name="Kitajima J.P."/>
            <person name="Okura V.K."/>
            <person name="Zhou Y."/>
            <person name="Chen L."/>
            <person name="Wood G.E."/>
            <person name="Almeida N.F. Jr."/>
            <person name="Woo L."/>
            <person name="Chen Y."/>
            <person name="Paulsen I.T."/>
            <person name="Eisen J.A."/>
            <person name="Karp P.D."/>
            <person name="Bovee D. Sr."/>
            <person name="Chapman P."/>
            <person name="Clendenning J."/>
            <person name="Deatherage G."/>
            <person name="Gillet W."/>
            <person name="Grant C."/>
            <person name="Kutyavin T."/>
            <person name="Levy R."/>
            <person name="Li M.-J."/>
            <person name="McClelland E."/>
            <person name="Palmieri A."/>
            <person name="Raymond C."/>
            <person name="Rouse G."/>
            <person name="Saenphimmachak C."/>
            <person name="Wu Z."/>
            <person name="Romero P."/>
            <person name="Gordon D."/>
            <person name="Zhang S."/>
            <person name="Yoo H."/>
            <person name="Tao Y."/>
            <person name="Biddle P."/>
            <person name="Jung M."/>
            <person name="Krespan W."/>
            <person name="Perry M."/>
            <person name="Gordon-Kamm B."/>
            <person name="Liao L."/>
            <person name="Kim S."/>
            <person name="Hendrick C."/>
            <person name="Zhao Z.-Y."/>
            <person name="Dolan M."/>
            <person name="Chumley F."/>
            <person name="Tingey S.V."/>
            <person name="Tomb J.-F."/>
            <person name="Gordon M.P."/>
            <person name="Olson M.V."/>
            <person name="Nester E.W."/>
        </authorList>
    </citation>
    <scope>NUCLEOTIDE SEQUENCE [LARGE SCALE GENOMIC DNA]</scope>
    <source>
        <strain>C58 / ATCC 33970</strain>
    </source>
</reference>
<reference key="2">
    <citation type="journal article" date="2001" name="Science">
        <title>Genome sequence of the plant pathogen and biotechnology agent Agrobacterium tumefaciens C58.</title>
        <authorList>
            <person name="Goodner B."/>
            <person name="Hinkle G."/>
            <person name="Gattung S."/>
            <person name="Miller N."/>
            <person name="Blanchard M."/>
            <person name="Qurollo B."/>
            <person name="Goldman B.S."/>
            <person name="Cao Y."/>
            <person name="Askenazi M."/>
            <person name="Halling C."/>
            <person name="Mullin L."/>
            <person name="Houmiel K."/>
            <person name="Gordon J."/>
            <person name="Vaudin M."/>
            <person name="Iartchouk O."/>
            <person name="Epp A."/>
            <person name="Liu F."/>
            <person name="Wollam C."/>
            <person name="Allinger M."/>
            <person name="Doughty D."/>
            <person name="Scott C."/>
            <person name="Lappas C."/>
            <person name="Markelz B."/>
            <person name="Flanagan C."/>
            <person name="Crowell C."/>
            <person name="Gurson J."/>
            <person name="Lomo C."/>
            <person name="Sear C."/>
            <person name="Strub G."/>
            <person name="Cielo C."/>
            <person name="Slater S."/>
        </authorList>
    </citation>
    <scope>NUCLEOTIDE SEQUENCE [LARGE SCALE GENOMIC DNA]</scope>
    <source>
        <strain>C58 / ATCC 33970</strain>
    </source>
</reference>
<name>CLPX_AGRFC</name>
<feature type="chain" id="PRO_0000160299" description="ATP-dependent Clp protease ATP-binding subunit ClpX">
    <location>
        <begin position="1"/>
        <end position="425"/>
    </location>
</feature>
<feature type="domain" description="ClpX-type ZB" evidence="2">
    <location>
        <begin position="6"/>
        <end position="59"/>
    </location>
</feature>
<feature type="binding site" evidence="2">
    <location>
        <position position="18"/>
    </location>
    <ligand>
        <name>Zn(2+)</name>
        <dbReference type="ChEBI" id="CHEBI:29105"/>
    </ligand>
</feature>
<feature type="binding site" evidence="2">
    <location>
        <position position="21"/>
    </location>
    <ligand>
        <name>Zn(2+)</name>
        <dbReference type="ChEBI" id="CHEBI:29105"/>
    </ligand>
</feature>
<feature type="binding site" evidence="2">
    <location>
        <position position="40"/>
    </location>
    <ligand>
        <name>Zn(2+)</name>
        <dbReference type="ChEBI" id="CHEBI:29105"/>
    </ligand>
</feature>
<feature type="binding site" evidence="2">
    <location>
        <position position="43"/>
    </location>
    <ligand>
        <name>Zn(2+)</name>
        <dbReference type="ChEBI" id="CHEBI:29105"/>
    </ligand>
</feature>
<feature type="binding site" evidence="1">
    <location>
        <begin position="122"/>
        <end position="129"/>
    </location>
    <ligand>
        <name>ATP</name>
        <dbReference type="ChEBI" id="CHEBI:30616"/>
    </ligand>
</feature>
<comment type="function">
    <text evidence="1">ATP-dependent specificity component of the Clp protease. It directs the protease to specific substrates. Can perform chaperone functions in the absence of ClpP.</text>
</comment>
<comment type="subunit">
    <text evidence="1">Component of the ClpX-ClpP complex. Forms a hexameric ring that, in the presence of ATP, binds to fourteen ClpP subunits assembled into a disk-like structure with a central cavity, resembling the structure of eukaryotic proteasomes.</text>
</comment>
<comment type="similarity">
    <text evidence="1">Belongs to the ClpX chaperone family.</text>
</comment>
<organism>
    <name type="scientific">Agrobacterium fabrum (strain C58 / ATCC 33970)</name>
    <name type="common">Agrobacterium tumefaciens (strain C58)</name>
    <dbReference type="NCBI Taxonomy" id="176299"/>
    <lineage>
        <taxon>Bacteria</taxon>
        <taxon>Pseudomonadati</taxon>
        <taxon>Pseudomonadota</taxon>
        <taxon>Alphaproteobacteria</taxon>
        <taxon>Hyphomicrobiales</taxon>
        <taxon>Rhizobiaceae</taxon>
        <taxon>Rhizobium/Agrobacterium group</taxon>
        <taxon>Agrobacterium</taxon>
        <taxon>Agrobacterium tumefaciens complex</taxon>
    </lineage>
</organism>
<accession>Q8UFY5</accession>
<sequence length="425" mass="46896">MSKVSGSNGGDSKNTLYCSFCGKSQHEVRKLIAGPTVFICDECVELCMDIIREENKTSMVKSREGVPTPQDIIKILDEYVIGQKQAKKILSVAVHNHYKRLAHASKNGDVELAKSNIMLVGPTGCGKTYLAQTLARIIDVPFTMADATTLTEAGYVGEDVENIILKLLQAADYNVERAQRGIVYIDEVDKISRKSDNPSITRDVSGEGVQQALLKIMEGTVASVPPQGGRKHPQQEFLQVDTTNILFICGGAFAGLDKIISARGEKTSIGFGATVKAEDDRRVGEVLRELEPEDLVKFGLIPEFIGRLPVLATLEDLDEDALIQILSEPKNALVKQYQRLFEMEDVELTFHEDALREIARRAITRKTGARGLRSIMEKILLDTMFELPTLEGVREVVISNDVVSGVARPLYIYADRQEEKANVSA</sequence>